<keyword id="KW-0324">Glycolysis</keyword>
<keyword id="KW-0413">Isomerase</keyword>
<keyword id="KW-0464">Manganese</keyword>
<keyword id="KW-0479">Metal-binding</keyword>
<keyword id="KW-1185">Reference proteome</keyword>
<proteinExistence type="inferred from homology"/>
<feature type="chain" id="PRO_0000212190" description="2,3-bisphosphoglycerate-independent phosphoglycerate mutase">
    <location>
        <begin position="1"/>
        <end position="511"/>
    </location>
</feature>
<feature type="active site" description="Phosphoserine intermediate" evidence="1">
    <location>
        <position position="64"/>
    </location>
</feature>
<feature type="binding site" evidence="1">
    <location>
        <position position="14"/>
    </location>
    <ligand>
        <name>Mn(2+)</name>
        <dbReference type="ChEBI" id="CHEBI:29035"/>
        <label>2</label>
    </ligand>
</feature>
<feature type="binding site" evidence="1">
    <location>
        <position position="64"/>
    </location>
    <ligand>
        <name>Mn(2+)</name>
        <dbReference type="ChEBI" id="CHEBI:29035"/>
        <label>2</label>
    </ligand>
</feature>
<feature type="binding site" evidence="1">
    <location>
        <position position="125"/>
    </location>
    <ligand>
        <name>substrate</name>
    </ligand>
</feature>
<feature type="binding site" evidence="1">
    <location>
        <begin position="155"/>
        <end position="156"/>
    </location>
    <ligand>
        <name>substrate</name>
    </ligand>
</feature>
<feature type="binding site" evidence="1">
    <location>
        <position position="187"/>
    </location>
    <ligand>
        <name>substrate</name>
    </ligand>
</feature>
<feature type="binding site" evidence="1">
    <location>
        <position position="193"/>
    </location>
    <ligand>
        <name>substrate</name>
    </ligand>
</feature>
<feature type="binding site" evidence="1">
    <location>
        <begin position="259"/>
        <end position="262"/>
    </location>
    <ligand>
        <name>substrate</name>
    </ligand>
</feature>
<feature type="binding site" evidence="1">
    <location>
        <position position="333"/>
    </location>
    <ligand>
        <name>substrate</name>
    </ligand>
</feature>
<feature type="binding site" evidence="1">
    <location>
        <position position="400"/>
    </location>
    <ligand>
        <name>Mn(2+)</name>
        <dbReference type="ChEBI" id="CHEBI:29035"/>
        <label>1</label>
    </ligand>
</feature>
<feature type="binding site" evidence="1">
    <location>
        <position position="404"/>
    </location>
    <ligand>
        <name>Mn(2+)</name>
        <dbReference type="ChEBI" id="CHEBI:29035"/>
        <label>1</label>
    </ligand>
</feature>
<feature type="binding site" evidence="1">
    <location>
        <position position="441"/>
    </location>
    <ligand>
        <name>Mn(2+)</name>
        <dbReference type="ChEBI" id="CHEBI:29035"/>
        <label>2</label>
    </ligand>
</feature>
<feature type="binding site" evidence="1">
    <location>
        <position position="442"/>
    </location>
    <ligand>
        <name>Mn(2+)</name>
        <dbReference type="ChEBI" id="CHEBI:29035"/>
        <label>2</label>
    </ligand>
</feature>
<feature type="binding site" evidence="1">
    <location>
        <position position="460"/>
    </location>
    <ligand>
        <name>Mn(2+)</name>
        <dbReference type="ChEBI" id="CHEBI:29035"/>
        <label>1</label>
    </ligand>
</feature>
<accession>Q88CX4</accession>
<sequence length="511" mass="55180">MTSTPKPLVLIILDGFGHSDIPEHNAIFAANKPVYDRLCATQPHGLISGSGMDVGLPDGQMGNSEVGHMNLGAGRVVYQDFTRVTKAIRDGEFFENPVLTGAVDKAVGAGKAVHILGLLSDGGVHSHQDHLVAMAELAAQRGAEKIYLHAFLDGRDTPPRSAQSSIELLDATFAKLGKGRIASLIGRYYAMDRDNRWDRVSAAYNLIVDSAAEYTADTALAGLEAAYARDESDEFVKATRIGEAVKVEDGDAVIFMNFRADRARELSRAFVEPDFTEFARARLPKMAAYIGLTQYSAKIPAPAAFAPSSLNNVLGEYLAKNGKTQLRIAETEKYAHVTFFFSGGREEPFEGEERILIPSPKVATYDLQPEMSAPEVTDRIVEAIEQQRFDVIVVNYANGDMVGHTGVFEAAVKAVEALDTCVGRIVDALDKVGGEALITADHGNVEQMEDECTGQAHTAHTTEPVPFIYVGKRNVKVREGGVLADVAPTMLKLLGLEKPVEMTGTSILVDA</sequence>
<protein>
    <recommendedName>
        <fullName evidence="1">2,3-bisphosphoglycerate-independent phosphoglycerate mutase</fullName>
        <shortName evidence="1">BPG-independent PGAM</shortName>
        <shortName evidence="1">Phosphoglyceromutase</shortName>
        <shortName evidence="1">iPGM</shortName>
        <ecNumber evidence="1">5.4.2.12</ecNumber>
    </recommendedName>
</protein>
<gene>
    <name evidence="1" type="primary">gpmI</name>
    <name type="synonym">pgm</name>
    <name type="ordered locus">PP_5056</name>
</gene>
<evidence type="ECO:0000255" key="1">
    <source>
        <dbReference type="HAMAP-Rule" id="MF_01038"/>
    </source>
</evidence>
<comment type="function">
    <text evidence="1">Catalyzes the interconversion of 2-phosphoglycerate and 3-phosphoglycerate.</text>
</comment>
<comment type="catalytic activity">
    <reaction evidence="1">
        <text>(2R)-2-phosphoglycerate = (2R)-3-phosphoglycerate</text>
        <dbReference type="Rhea" id="RHEA:15901"/>
        <dbReference type="ChEBI" id="CHEBI:58272"/>
        <dbReference type="ChEBI" id="CHEBI:58289"/>
        <dbReference type="EC" id="5.4.2.12"/>
    </reaction>
</comment>
<comment type="cofactor">
    <cofactor evidence="1">
        <name>Mn(2+)</name>
        <dbReference type="ChEBI" id="CHEBI:29035"/>
    </cofactor>
    <text evidence="1">Binds 2 manganese ions per subunit.</text>
</comment>
<comment type="pathway">
    <text evidence="1">Carbohydrate degradation; glycolysis; pyruvate from D-glyceraldehyde 3-phosphate: step 3/5.</text>
</comment>
<comment type="subunit">
    <text evidence="1">Monomer.</text>
</comment>
<comment type="similarity">
    <text evidence="1">Belongs to the BPG-independent phosphoglycerate mutase family.</text>
</comment>
<name>GPMI_PSEPK</name>
<dbReference type="EC" id="5.4.2.12" evidence="1"/>
<dbReference type="EMBL" id="AE015451">
    <property type="protein sequence ID" value="AAN70621.1"/>
    <property type="molecule type" value="Genomic_DNA"/>
</dbReference>
<dbReference type="RefSeq" id="NP_747157.1">
    <property type="nucleotide sequence ID" value="NC_002947.4"/>
</dbReference>
<dbReference type="RefSeq" id="WP_010955606.1">
    <property type="nucleotide sequence ID" value="NZ_CP169744.1"/>
</dbReference>
<dbReference type="SMR" id="Q88CX4"/>
<dbReference type="STRING" id="160488.PP_5056"/>
<dbReference type="PaxDb" id="160488-PP_5056"/>
<dbReference type="GeneID" id="83682789"/>
<dbReference type="KEGG" id="ppu:PP_5056"/>
<dbReference type="PATRIC" id="fig|160488.4.peg.5398"/>
<dbReference type="eggNOG" id="COG0696">
    <property type="taxonomic scope" value="Bacteria"/>
</dbReference>
<dbReference type="HOGENOM" id="CLU_026099_2_0_6"/>
<dbReference type="OrthoDB" id="9800863at2"/>
<dbReference type="PhylomeDB" id="Q88CX4"/>
<dbReference type="BioCyc" id="PPUT160488:G1G01-5400-MONOMER"/>
<dbReference type="UniPathway" id="UPA00109">
    <property type="reaction ID" value="UER00186"/>
</dbReference>
<dbReference type="Proteomes" id="UP000000556">
    <property type="component" value="Chromosome"/>
</dbReference>
<dbReference type="GO" id="GO:0005829">
    <property type="term" value="C:cytosol"/>
    <property type="evidence" value="ECO:0007669"/>
    <property type="project" value="TreeGrafter"/>
</dbReference>
<dbReference type="GO" id="GO:0030145">
    <property type="term" value="F:manganese ion binding"/>
    <property type="evidence" value="ECO:0007669"/>
    <property type="project" value="UniProtKB-UniRule"/>
</dbReference>
<dbReference type="GO" id="GO:0004619">
    <property type="term" value="F:phosphoglycerate mutase activity"/>
    <property type="evidence" value="ECO:0007669"/>
    <property type="project" value="UniProtKB-EC"/>
</dbReference>
<dbReference type="GO" id="GO:0006007">
    <property type="term" value="P:glucose catabolic process"/>
    <property type="evidence" value="ECO:0007669"/>
    <property type="project" value="InterPro"/>
</dbReference>
<dbReference type="GO" id="GO:0006096">
    <property type="term" value="P:glycolytic process"/>
    <property type="evidence" value="ECO:0007669"/>
    <property type="project" value="UniProtKB-UniRule"/>
</dbReference>
<dbReference type="CDD" id="cd16010">
    <property type="entry name" value="iPGM"/>
    <property type="match status" value="1"/>
</dbReference>
<dbReference type="FunFam" id="3.40.1450.10:FF:000001">
    <property type="entry name" value="2,3-bisphosphoglycerate-independent phosphoglycerate mutase"/>
    <property type="match status" value="1"/>
</dbReference>
<dbReference type="FunFam" id="3.40.720.10:FF:000001">
    <property type="entry name" value="2,3-bisphosphoglycerate-independent phosphoglycerate mutase"/>
    <property type="match status" value="1"/>
</dbReference>
<dbReference type="Gene3D" id="3.40.720.10">
    <property type="entry name" value="Alkaline Phosphatase, subunit A"/>
    <property type="match status" value="1"/>
</dbReference>
<dbReference type="Gene3D" id="3.40.1450.10">
    <property type="entry name" value="BPG-independent phosphoglycerate mutase, domain B"/>
    <property type="match status" value="1"/>
</dbReference>
<dbReference type="HAMAP" id="MF_01038">
    <property type="entry name" value="GpmI"/>
    <property type="match status" value="1"/>
</dbReference>
<dbReference type="InterPro" id="IPR017850">
    <property type="entry name" value="Alkaline_phosphatase_core_sf"/>
</dbReference>
<dbReference type="InterPro" id="IPR011258">
    <property type="entry name" value="BPG-indep_PGM_N"/>
</dbReference>
<dbReference type="InterPro" id="IPR006124">
    <property type="entry name" value="Metalloenzyme"/>
</dbReference>
<dbReference type="InterPro" id="IPR036646">
    <property type="entry name" value="PGAM_B_sf"/>
</dbReference>
<dbReference type="InterPro" id="IPR005995">
    <property type="entry name" value="Pgm_bpd_ind"/>
</dbReference>
<dbReference type="NCBIfam" id="TIGR01307">
    <property type="entry name" value="pgm_bpd_ind"/>
    <property type="match status" value="1"/>
</dbReference>
<dbReference type="PANTHER" id="PTHR31637">
    <property type="entry name" value="2,3-BISPHOSPHOGLYCERATE-INDEPENDENT PHOSPHOGLYCERATE MUTASE"/>
    <property type="match status" value="1"/>
</dbReference>
<dbReference type="PANTHER" id="PTHR31637:SF0">
    <property type="entry name" value="2,3-BISPHOSPHOGLYCERATE-INDEPENDENT PHOSPHOGLYCERATE MUTASE"/>
    <property type="match status" value="1"/>
</dbReference>
<dbReference type="Pfam" id="PF06415">
    <property type="entry name" value="iPGM_N"/>
    <property type="match status" value="1"/>
</dbReference>
<dbReference type="Pfam" id="PF01676">
    <property type="entry name" value="Metalloenzyme"/>
    <property type="match status" value="1"/>
</dbReference>
<dbReference type="PIRSF" id="PIRSF001492">
    <property type="entry name" value="IPGAM"/>
    <property type="match status" value="1"/>
</dbReference>
<dbReference type="SUPFAM" id="SSF64158">
    <property type="entry name" value="2,3-Bisphosphoglycerate-independent phosphoglycerate mutase, substrate-binding domain"/>
    <property type="match status" value="1"/>
</dbReference>
<dbReference type="SUPFAM" id="SSF53649">
    <property type="entry name" value="Alkaline phosphatase-like"/>
    <property type="match status" value="1"/>
</dbReference>
<reference key="1">
    <citation type="journal article" date="2002" name="Environ. Microbiol.">
        <title>Complete genome sequence and comparative analysis of the metabolically versatile Pseudomonas putida KT2440.</title>
        <authorList>
            <person name="Nelson K.E."/>
            <person name="Weinel C."/>
            <person name="Paulsen I.T."/>
            <person name="Dodson R.J."/>
            <person name="Hilbert H."/>
            <person name="Martins dos Santos V.A.P."/>
            <person name="Fouts D.E."/>
            <person name="Gill S.R."/>
            <person name="Pop M."/>
            <person name="Holmes M."/>
            <person name="Brinkac L.M."/>
            <person name="Beanan M.J."/>
            <person name="DeBoy R.T."/>
            <person name="Daugherty S.C."/>
            <person name="Kolonay J.F."/>
            <person name="Madupu R."/>
            <person name="Nelson W.C."/>
            <person name="White O."/>
            <person name="Peterson J.D."/>
            <person name="Khouri H.M."/>
            <person name="Hance I."/>
            <person name="Chris Lee P."/>
            <person name="Holtzapple E.K."/>
            <person name="Scanlan D."/>
            <person name="Tran K."/>
            <person name="Moazzez A."/>
            <person name="Utterback T.R."/>
            <person name="Rizzo M."/>
            <person name="Lee K."/>
            <person name="Kosack D."/>
            <person name="Moestl D."/>
            <person name="Wedler H."/>
            <person name="Lauber J."/>
            <person name="Stjepandic D."/>
            <person name="Hoheisel J."/>
            <person name="Straetz M."/>
            <person name="Heim S."/>
            <person name="Kiewitz C."/>
            <person name="Eisen J.A."/>
            <person name="Timmis K.N."/>
            <person name="Duesterhoeft A."/>
            <person name="Tuemmler B."/>
            <person name="Fraser C.M."/>
        </authorList>
    </citation>
    <scope>NUCLEOTIDE SEQUENCE [LARGE SCALE GENOMIC DNA]</scope>
    <source>
        <strain>ATCC 47054 / DSM 6125 / CFBP 8728 / NCIMB 11950 / KT2440</strain>
    </source>
</reference>
<organism>
    <name type="scientific">Pseudomonas putida (strain ATCC 47054 / DSM 6125 / CFBP 8728 / NCIMB 11950 / KT2440)</name>
    <dbReference type="NCBI Taxonomy" id="160488"/>
    <lineage>
        <taxon>Bacteria</taxon>
        <taxon>Pseudomonadati</taxon>
        <taxon>Pseudomonadota</taxon>
        <taxon>Gammaproteobacteria</taxon>
        <taxon>Pseudomonadales</taxon>
        <taxon>Pseudomonadaceae</taxon>
        <taxon>Pseudomonas</taxon>
    </lineage>
</organism>